<proteinExistence type="evidence at protein level"/>
<protein>
    <recommendedName>
        <fullName>Quinol oxidase subunit 2</fullName>
        <ecNumber>1.10.3.-</ecNumber>
    </recommendedName>
    <alternativeName>
        <fullName>Cytochrome aa(3) subunit 2</fullName>
    </alternativeName>
    <alternativeName>
        <fullName>Quinol oxidase polypeptide II</fullName>
    </alternativeName>
</protein>
<reference key="1">
    <citation type="journal article" date="2003" name="Nature">
        <title>Genome sequence of Bacillus cereus and comparative analysis with Bacillus anthracis.</title>
        <authorList>
            <person name="Ivanova N."/>
            <person name="Sorokin A."/>
            <person name="Anderson I."/>
            <person name="Galleron N."/>
            <person name="Candelon B."/>
            <person name="Kapatral V."/>
            <person name="Bhattacharyya A."/>
            <person name="Reznik G."/>
            <person name="Mikhailova N."/>
            <person name="Lapidus A."/>
            <person name="Chu L."/>
            <person name="Mazur M."/>
            <person name="Goltsman E."/>
            <person name="Larsen N."/>
            <person name="D'Souza M."/>
            <person name="Walunas T."/>
            <person name="Grechkin Y."/>
            <person name="Pusch G."/>
            <person name="Haselkorn R."/>
            <person name="Fonstein M."/>
            <person name="Ehrlich S.D."/>
            <person name="Overbeek R."/>
            <person name="Kyrpides N.C."/>
        </authorList>
    </citation>
    <scope>NUCLEOTIDE SEQUENCE [LARGE SCALE GENOMIC DNA]</scope>
    <source>
        <strain>ATCC 14579 / DSM 31 / CCUG 7414 / JCM 2152 / NBRC 15305 / NCIMB 9373 / NCTC 2599 / NRRL B-3711</strain>
    </source>
</reference>
<reference evidence="4" key="2">
    <citation type="journal article" date="2003" name="J. Biol. Chem.">
        <title>A novel double heme substitution produces a functional bo3 variant of the quinol oxidase aa3 of Bacillus cereus. Purification and partial characterization.</title>
        <authorList>
            <person name="Contreras-Zentella M."/>
            <person name="Mendoza G."/>
            <person name="Membrillo-Hernandez J."/>
            <person name="Escamilla J.E."/>
        </authorList>
    </citation>
    <scope>PROTEIN SEQUENCE OF 29-47</scope>
    <scope>FUNCTION</scope>
    <scope>CATALYTIC ACTIVITY</scope>
    <source>
        <strain evidence="3">ATCC 14579 / DSM 31 / PYM1</strain>
    </source>
</reference>
<comment type="function">
    <text evidence="3 4">Catalyzes quinol oxidation with the concomitant reduction of oxygen to water. Subunit II transfers the electrons from a quinol to the binuclear center of the catalytic subunit I.</text>
</comment>
<comment type="catalytic activity">
    <reaction evidence="3">
        <text>2 a quinol + O2 = 2 a quinone + 2 H2O</text>
        <dbReference type="Rhea" id="RHEA:55376"/>
        <dbReference type="ChEBI" id="CHEBI:15377"/>
        <dbReference type="ChEBI" id="CHEBI:15379"/>
        <dbReference type="ChEBI" id="CHEBI:24646"/>
        <dbReference type="ChEBI" id="CHEBI:132124"/>
    </reaction>
</comment>
<comment type="subcellular location">
    <subcellularLocation>
        <location>Cell membrane</location>
        <topology>Multi-pass membrane protein</topology>
    </subcellularLocation>
</comment>
<comment type="similarity">
    <text evidence="2">Belongs to the cytochrome c oxidase subunit 2 family.</text>
</comment>
<evidence type="ECO:0000250" key="1">
    <source>
        <dbReference type="UniProtKB" id="Q81V01"/>
    </source>
</evidence>
<evidence type="ECO:0000255" key="2"/>
<evidence type="ECO:0000269" key="3">
    <source>
    </source>
</evidence>
<evidence type="ECO:0000305" key="4"/>
<sequence length="291" mass="33293">MQLKKAFWKLASLLPLSLLLFLGGCDKKLAVLNPQGPVAKAQYDLIVWSFLLMSLIIAIVFILFTVILIRYREKPENMDYEPPEQHGNTLLEIIWTLVPVIIVIALSIPTVKATYASEEVPKESKHIKPVEIYVTSANWKWLFSYPEEKIETVNYLNIPAGVPIQFKLTSVGPMNAFWVPELGGMKYTMDGMIMDLYLQADKPGSYLGRSANFSGEGFTHMEFEVEAKTKEKYDKWVKEVQETAPKLTEAKYNEIVKPGVVGRMTFSSHHLSYVDPKSLEYCDYNYYKNKK</sequence>
<name>QOX2_BACCR</name>
<keyword id="KW-1003">Cell membrane</keyword>
<keyword id="KW-0903">Direct protein sequencing</keyword>
<keyword id="KW-0249">Electron transport</keyword>
<keyword id="KW-0472">Membrane</keyword>
<keyword id="KW-0560">Oxidoreductase</keyword>
<keyword id="KW-1185">Reference proteome</keyword>
<keyword id="KW-0679">Respiratory chain</keyword>
<keyword id="KW-0732">Signal</keyword>
<keyword id="KW-0812">Transmembrane</keyword>
<keyword id="KW-1133">Transmembrane helix</keyword>
<keyword id="KW-0813">Transport</keyword>
<dbReference type="EC" id="1.10.3.-"/>
<dbReference type="EMBL" id="AE016877">
    <property type="protein sequence ID" value="AAP07712.1"/>
    <property type="molecule type" value="Genomic_DNA"/>
</dbReference>
<dbReference type="RefSeq" id="NP_830511.1">
    <property type="nucleotide sequence ID" value="NC_004722.1"/>
</dbReference>
<dbReference type="RefSeq" id="WP_001176165.1">
    <property type="nucleotide sequence ID" value="NZ_CP138336.1"/>
</dbReference>
<dbReference type="SMR" id="Q81HT3"/>
<dbReference type="STRING" id="226900.BC_0698"/>
<dbReference type="MetOSite" id="Q81HT3"/>
<dbReference type="KEGG" id="bce:BC0698"/>
<dbReference type="PATRIC" id="fig|226900.8.peg.658"/>
<dbReference type="HOGENOM" id="CLU_036876_6_0_9"/>
<dbReference type="OrthoDB" id="9783445at2"/>
<dbReference type="Proteomes" id="UP000001417">
    <property type="component" value="Chromosome"/>
</dbReference>
<dbReference type="GO" id="GO:0005886">
    <property type="term" value="C:plasma membrane"/>
    <property type="evidence" value="ECO:0007669"/>
    <property type="project" value="UniProtKB-SubCell"/>
</dbReference>
<dbReference type="GO" id="GO:0005507">
    <property type="term" value="F:copper ion binding"/>
    <property type="evidence" value="ECO:0007669"/>
    <property type="project" value="InterPro"/>
</dbReference>
<dbReference type="GO" id="GO:0009486">
    <property type="term" value="F:cytochrome bo3 ubiquinol oxidase activity"/>
    <property type="evidence" value="ECO:0007669"/>
    <property type="project" value="InterPro"/>
</dbReference>
<dbReference type="GO" id="GO:0004129">
    <property type="term" value="F:cytochrome-c oxidase activity"/>
    <property type="evidence" value="ECO:0007669"/>
    <property type="project" value="InterPro"/>
</dbReference>
<dbReference type="GO" id="GO:0016682">
    <property type="term" value="F:oxidoreductase activity, acting on diphenols and related substances as donors, oxygen as acceptor"/>
    <property type="evidence" value="ECO:0000314"/>
    <property type="project" value="UniProtKB"/>
</dbReference>
<dbReference type="GO" id="GO:0042773">
    <property type="term" value="P:ATP synthesis coupled electron transport"/>
    <property type="evidence" value="ECO:0000314"/>
    <property type="project" value="UniProtKB"/>
</dbReference>
<dbReference type="CDD" id="cd04212">
    <property type="entry name" value="CuRO_UO_II"/>
    <property type="match status" value="1"/>
</dbReference>
<dbReference type="FunFam" id="1.10.287.90:FF:000005">
    <property type="entry name" value="Quinol oxidase subunit 2"/>
    <property type="match status" value="1"/>
</dbReference>
<dbReference type="FunFam" id="2.60.40.420:FF:000014">
    <property type="entry name" value="Quinol oxidase subunit 2"/>
    <property type="match status" value="1"/>
</dbReference>
<dbReference type="Gene3D" id="1.10.287.90">
    <property type="match status" value="1"/>
</dbReference>
<dbReference type="Gene3D" id="2.60.40.420">
    <property type="entry name" value="Cupredoxins - blue copper proteins"/>
    <property type="match status" value="1"/>
</dbReference>
<dbReference type="InterPro" id="IPR045187">
    <property type="entry name" value="CcO_II"/>
</dbReference>
<dbReference type="InterPro" id="IPR002429">
    <property type="entry name" value="CcO_II-like_C"/>
</dbReference>
<dbReference type="InterPro" id="IPR008972">
    <property type="entry name" value="Cupredoxin"/>
</dbReference>
<dbReference type="InterPro" id="IPR034227">
    <property type="entry name" value="CuRO_UO_II"/>
</dbReference>
<dbReference type="InterPro" id="IPR011759">
    <property type="entry name" value="Cyt_c_oxidase_su2_TM_dom"/>
</dbReference>
<dbReference type="InterPro" id="IPR036257">
    <property type="entry name" value="Cyt_c_oxidase_su2_TM_sf"/>
</dbReference>
<dbReference type="InterPro" id="IPR006333">
    <property type="entry name" value="Cyt_o_ubiquinol_oxidase_su2"/>
</dbReference>
<dbReference type="InterPro" id="IPR006332">
    <property type="entry name" value="QoxA"/>
</dbReference>
<dbReference type="NCBIfam" id="TIGR01432">
    <property type="entry name" value="QOXA"/>
    <property type="match status" value="1"/>
</dbReference>
<dbReference type="PANTHER" id="PTHR22888:SF18">
    <property type="entry name" value="CYTOCHROME BO(3) UBIQUINOL OXIDASE SUBUNIT 2"/>
    <property type="match status" value="1"/>
</dbReference>
<dbReference type="PANTHER" id="PTHR22888">
    <property type="entry name" value="CYTOCHROME C OXIDASE, SUBUNIT II"/>
    <property type="match status" value="1"/>
</dbReference>
<dbReference type="Pfam" id="PF02790">
    <property type="entry name" value="COX2_TM"/>
    <property type="match status" value="1"/>
</dbReference>
<dbReference type="PIRSF" id="PIRSF000292">
    <property type="entry name" value="Ubi_od_II"/>
    <property type="match status" value="1"/>
</dbReference>
<dbReference type="PRINTS" id="PR01166">
    <property type="entry name" value="CYCOXIDASEII"/>
</dbReference>
<dbReference type="SUPFAM" id="SSF49503">
    <property type="entry name" value="Cupredoxins"/>
    <property type="match status" value="1"/>
</dbReference>
<dbReference type="SUPFAM" id="SSF81464">
    <property type="entry name" value="Cytochrome c oxidase subunit II-like, transmembrane region"/>
    <property type="match status" value="1"/>
</dbReference>
<dbReference type="PROSITE" id="PS50857">
    <property type="entry name" value="COX2_CUA"/>
    <property type="match status" value="1"/>
</dbReference>
<dbReference type="PROSITE" id="PS50999">
    <property type="entry name" value="COX2_TM"/>
    <property type="match status" value="1"/>
</dbReference>
<feature type="signal peptide" evidence="3">
    <location>
        <begin position="1"/>
        <end position="28"/>
    </location>
</feature>
<feature type="chain" id="PRO_0000006068" description="Quinol oxidase subunit 2">
    <location>
        <begin position="29"/>
        <end position="291"/>
    </location>
</feature>
<feature type="transmembrane region" description="Helical" evidence="2">
    <location>
        <begin position="49"/>
        <end position="69"/>
    </location>
</feature>
<feature type="transmembrane region" description="Helical" evidence="2">
    <location>
        <begin position="91"/>
        <end position="111"/>
    </location>
</feature>
<organism>
    <name type="scientific">Bacillus cereus (strain ATCC 14579 / DSM 31 / CCUG 7414 / JCM 2152 / NBRC 15305 / NCIMB 9373 / NCTC 2599 / NRRL B-3711)</name>
    <dbReference type="NCBI Taxonomy" id="226900"/>
    <lineage>
        <taxon>Bacteria</taxon>
        <taxon>Bacillati</taxon>
        <taxon>Bacillota</taxon>
        <taxon>Bacilli</taxon>
        <taxon>Bacillales</taxon>
        <taxon>Bacillaceae</taxon>
        <taxon>Bacillus</taxon>
        <taxon>Bacillus cereus group</taxon>
    </lineage>
</organism>
<accession>Q81HT3</accession>
<gene>
    <name evidence="1" type="primary">qoxA</name>
    <name type="ordered locus">BC_0698</name>
</gene>